<accession>Q3E6S9</accession>
<accession>Q3E932</accession>
<dbReference type="EC" id="4.4.1.-"/>
<dbReference type="EMBL" id="AF058914">
    <property type="status" value="NOT_ANNOTATED_CDS"/>
    <property type="molecule type" value="Genomic_DNA"/>
</dbReference>
<dbReference type="EMBL" id="CP002688">
    <property type="protein sequence ID" value="AED93591.1"/>
    <property type="molecule type" value="Genomic_DNA"/>
</dbReference>
<dbReference type="EMBL" id="CP002688">
    <property type="protein sequence ID" value="AED93592.1"/>
    <property type="molecule type" value="Genomic_DNA"/>
</dbReference>
<dbReference type="EMBL" id="AK229365">
    <property type="protein sequence ID" value="BAF01228.1"/>
    <property type="molecule type" value="mRNA"/>
</dbReference>
<dbReference type="RefSeq" id="NP_850886.1">
    <property type="nucleotide sequence ID" value="NM_180555.3"/>
</dbReference>
<dbReference type="RefSeq" id="NP_974838.1">
    <property type="nucleotide sequence ID" value="NM_203109.2"/>
</dbReference>
<dbReference type="SMR" id="Q3E6S9"/>
<dbReference type="FunCoup" id="Q3E6S9">
    <property type="interactions" value="907"/>
</dbReference>
<dbReference type="STRING" id="3702.Q3E6S9"/>
<dbReference type="PaxDb" id="3702-AT5G26600.2"/>
<dbReference type="ProteomicsDB" id="220298"/>
<dbReference type="EnsemblPlants" id="AT5G26600.1">
    <property type="protein sequence ID" value="AT5G26600.1"/>
    <property type="gene ID" value="AT5G26600"/>
</dbReference>
<dbReference type="EnsemblPlants" id="AT5G26600.2">
    <property type="protein sequence ID" value="AT5G26600.2"/>
    <property type="gene ID" value="AT5G26600"/>
</dbReference>
<dbReference type="GeneID" id="832730"/>
<dbReference type="Gramene" id="AT5G26600.1">
    <property type="protein sequence ID" value="AT5G26600.1"/>
    <property type="gene ID" value="AT5G26600"/>
</dbReference>
<dbReference type="Gramene" id="AT5G26600.2">
    <property type="protein sequence ID" value="AT5G26600.2"/>
    <property type="gene ID" value="AT5G26600"/>
</dbReference>
<dbReference type="KEGG" id="ath:AT5G26600"/>
<dbReference type="Araport" id="AT5G26600"/>
<dbReference type="TAIR" id="AT5G26600"/>
<dbReference type="eggNOG" id="KOG1549">
    <property type="taxonomic scope" value="Eukaryota"/>
</dbReference>
<dbReference type="HOGENOM" id="CLU_003433_3_2_1"/>
<dbReference type="InParanoid" id="Q3E6S9"/>
<dbReference type="OMA" id="TGNCHKW"/>
<dbReference type="OrthoDB" id="5978656at2759"/>
<dbReference type="PhylomeDB" id="Q3E6S9"/>
<dbReference type="PRO" id="PR:Q3E6S9"/>
<dbReference type="Proteomes" id="UP000006548">
    <property type="component" value="Chromosome 5"/>
</dbReference>
<dbReference type="ExpressionAtlas" id="Q3E6S9">
    <property type="expression patterns" value="baseline and differential"/>
</dbReference>
<dbReference type="GO" id="GO:0009507">
    <property type="term" value="C:chloroplast"/>
    <property type="evidence" value="ECO:0007669"/>
    <property type="project" value="UniProtKB-SubCell"/>
</dbReference>
<dbReference type="GO" id="GO:0016829">
    <property type="term" value="F:lyase activity"/>
    <property type="evidence" value="ECO:0007669"/>
    <property type="project" value="UniProtKB-KW"/>
</dbReference>
<dbReference type="Gene3D" id="3.40.640.10">
    <property type="entry name" value="Type I PLP-dependent aspartate aminotransferase-like (Major domain)"/>
    <property type="match status" value="1"/>
</dbReference>
<dbReference type="InterPro" id="IPR000192">
    <property type="entry name" value="Aminotrans_V_dom"/>
</dbReference>
<dbReference type="InterPro" id="IPR015424">
    <property type="entry name" value="PyrdxlP-dep_Trfase"/>
</dbReference>
<dbReference type="InterPro" id="IPR015421">
    <property type="entry name" value="PyrdxlP-dep_Trfase_major"/>
</dbReference>
<dbReference type="PANTHER" id="PTHR43092:SF2">
    <property type="entry name" value="HERCYNYLCYSTEINE SULFOXIDE LYASE"/>
    <property type="match status" value="1"/>
</dbReference>
<dbReference type="PANTHER" id="PTHR43092">
    <property type="entry name" value="L-CYSTEINE DESULFHYDRASE"/>
    <property type="match status" value="1"/>
</dbReference>
<dbReference type="Pfam" id="PF00266">
    <property type="entry name" value="Aminotran_5"/>
    <property type="match status" value="1"/>
</dbReference>
<dbReference type="SUPFAM" id="SSF53383">
    <property type="entry name" value="PLP-dependent transferases"/>
    <property type="match status" value="1"/>
</dbReference>
<feature type="transit peptide" description="Chloroplast" evidence="2">
    <location>
        <begin position="1"/>
        <end position="24"/>
    </location>
</feature>
<feature type="chain" id="PRO_0000432215" description="Probable L-cysteine desulfhydrase, chloroplastic" evidence="2">
    <location>
        <begin position="25"/>
        <end position="475"/>
    </location>
</feature>
<feature type="region of interest" description="Disordered" evidence="4">
    <location>
        <begin position="1"/>
        <end position="40"/>
    </location>
</feature>
<feature type="compositionally biased region" description="Low complexity" evidence="4">
    <location>
        <begin position="22"/>
        <end position="32"/>
    </location>
</feature>
<feature type="modified residue" description="N6-(pyridoxal phosphate)lysine" evidence="1">
    <location>
        <position position="284"/>
    </location>
</feature>
<reference key="1">
    <citation type="journal article" date="2000" name="Nature">
        <title>Sequence and analysis of chromosome 5 of the plant Arabidopsis thaliana.</title>
        <authorList>
            <person name="Tabata S."/>
            <person name="Kaneko T."/>
            <person name="Nakamura Y."/>
            <person name="Kotani H."/>
            <person name="Kato T."/>
            <person name="Asamizu E."/>
            <person name="Miyajima N."/>
            <person name="Sasamoto S."/>
            <person name="Kimura T."/>
            <person name="Hosouchi T."/>
            <person name="Kawashima K."/>
            <person name="Kohara M."/>
            <person name="Matsumoto M."/>
            <person name="Matsuno A."/>
            <person name="Muraki A."/>
            <person name="Nakayama S."/>
            <person name="Nakazaki N."/>
            <person name="Naruo K."/>
            <person name="Okumura S."/>
            <person name="Shinpo S."/>
            <person name="Takeuchi C."/>
            <person name="Wada T."/>
            <person name="Watanabe A."/>
            <person name="Yamada M."/>
            <person name="Yasuda M."/>
            <person name="Sato S."/>
            <person name="de la Bastide M."/>
            <person name="Huang E."/>
            <person name="Spiegel L."/>
            <person name="Gnoj L."/>
            <person name="O'Shaughnessy A."/>
            <person name="Preston R."/>
            <person name="Habermann K."/>
            <person name="Murray J."/>
            <person name="Johnson D."/>
            <person name="Rohlfing T."/>
            <person name="Nelson J."/>
            <person name="Stoneking T."/>
            <person name="Pepin K."/>
            <person name="Spieth J."/>
            <person name="Sekhon M."/>
            <person name="Armstrong J."/>
            <person name="Becker M."/>
            <person name="Belter E."/>
            <person name="Cordum H."/>
            <person name="Cordes M."/>
            <person name="Courtney L."/>
            <person name="Courtney W."/>
            <person name="Dante M."/>
            <person name="Du H."/>
            <person name="Edwards J."/>
            <person name="Fryman J."/>
            <person name="Haakensen B."/>
            <person name="Lamar E."/>
            <person name="Latreille P."/>
            <person name="Leonard S."/>
            <person name="Meyer R."/>
            <person name="Mulvaney E."/>
            <person name="Ozersky P."/>
            <person name="Riley A."/>
            <person name="Strowmatt C."/>
            <person name="Wagner-McPherson C."/>
            <person name="Wollam A."/>
            <person name="Yoakum M."/>
            <person name="Bell M."/>
            <person name="Dedhia N."/>
            <person name="Parnell L."/>
            <person name="Shah R."/>
            <person name="Rodriguez M."/>
            <person name="Hoon See L."/>
            <person name="Vil D."/>
            <person name="Baker J."/>
            <person name="Kirchoff K."/>
            <person name="Toth K."/>
            <person name="King L."/>
            <person name="Bahret A."/>
            <person name="Miller B."/>
            <person name="Marra M.A."/>
            <person name="Martienssen R."/>
            <person name="McCombie W.R."/>
            <person name="Wilson R.K."/>
            <person name="Murphy G."/>
            <person name="Bancroft I."/>
            <person name="Volckaert G."/>
            <person name="Wambutt R."/>
            <person name="Duesterhoeft A."/>
            <person name="Stiekema W."/>
            <person name="Pohl T."/>
            <person name="Entian K.-D."/>
            <person name="Terryn N."/>
            <person name="Hartley N."/>
            <person name="Bent E."/>
            <person name="Johnson S."/>
            <person name="Langham S.-A."/>
            <person name="McCullagh B."/>
            <person name="Robben J."/>
            <person name="Grymonprez B."/>
            <person name="Zimmermann W."/>
            <person name="Ramsperger U."/>
            <person name="Wedler H."/>
            <person name="Balke K."/>
            <person name="Wedler E."/>
            <person name="Peters S."/>
            <person name="van Staveren M."/>
            <person name="Dirkse W."/>
            <person name="Mooijman P."/>
            <person name="Klein Lankhorst R."/>
            <person name="Weitzenegger T."/>
            <person name="Bothe G."/>
            <person name="Rose M."/>
            <person name="Hauf J."/>
            <person name="Berneiser S."/>
            <person name="Hempel S."/>
            <person name="Feldpausch M."/>
            <person name="Lamberth S."/>
            <person name="Villarroel R."/>
            <person name="Gielen J."/>
            <person name="Ardiles W."/>
            <person name="Bents O."/>
            <person name="Lemcke K."/>
            <person name="Kolesov G."/>
            <person name="Mayer K.F.X."/>
            <person name="Rudd S."/>
            <person name="Schoof H."/>
            <person name="Schueller C."/>
            <person name="Zaccaria P."/>
            <person name="Mewes H.-W."/>
            <person name="Bevan M."/>
            <person name="Fransz P.F."/>
        </authorList>
    </citation>
    <scope>NUCLEOTIDE SEQUENCE [LARGE SCALE GENOMIC DNA]</scope>
    <source>
        <strain>cv. Columbia</strain>
    </source>
</reference>
<reference key="2">
    <citation type="journal article" date="2017" name="Plant J.">
        <title>Araport11: a complete reannotation of the Arabidopsis thaliana reference genome.</title>
        <authorList>
            <person name="Cheng C.Y."/>
            <person name="Krishnakumar V."/>
            <person name="Chan A.P."/>
            <person name="Thibaud-Nissen F."/>
            <person name="Schobel S."/>
            <person name="Town C.D."/>
        </authorList>
    </citation>
    <scope>GENOME REANNOTATION</scope>
    <source>
        <strain>cv. Columbia</strain>
    </source>
</reference>
<reference key="3">
    <citation type="submission" date="2006-07" db="EMBL/GenBank/DDBJ databases">
        <title>Large-scale analysis of RIKEN Arabidopsis full-length (RAFL) cDNAs.</title>
        <authorList>
            <person name="Totoki Y."/>
            <person name="Seki M."/>
            <person name="Ishida J."/>
            <person name="Nakajima M."/>
            <person name="Enju A."/>
            <person name="Kamiya A."/>
            <person name="Narusaka M."/>
            <person name="Shin-i T."/>
            <person name="Nakagawa M."/>
            <person name="Sakamoto N."/>
            <person name="Oishi K."/>
            <person name="Kohara Y."/>
            <person name="Kobayashi M."/>
            <person name="Toyoda A."/>
            <person name="Sakaki Y."/>
            <person name="Sakurai T."/>
            <person name="Iida K."/>
            <person name="Akiyama K."/>
            <person name="Satou M."/>
            <person name="Toyoda T."/>
            <person name="Konagaya A."/>
            <person name="Carninci P."/>
            <person name="Kawai J."/>
            <person name="Hayashizaki Y."/>
            <person name="Shinozaki K."/>
        </authorList>
    </citation>
    <scope>NUCLEOTIDE SEQUENCE [LARGE SCALE MRNA]</scope>
    <source>
        <strain>cv. Columbia</strain>
    </source>
</reference>
<reference key="4">
    <citation type="journal article" date="2008" name="Plant Cell">
        <title>The Arabidopsis onset of leaf death5 mutation of quinolinate synthase affects nicotinamide adenine dinucleotide biosynthesis and causes early ageing.</title>
        <authorList>
            <person name="Schippers J.H."/>
            <person name="Nunes-Nesi A."/>
            <person name="Apetrei R."/>
            <person name="Hille J."/>
            <person name="Fernie A.R."/>
            <person name="Dijkwel P.P."/>
        </authorList>
    </citation>
    <scope>IDENTIFICATION</scope>
    <scope>INTERACTION WITH QS</scope>
    <source>
        <strain>cv. Landsberg erecta</strain>
    </source>
</reference>
<name>CNIF3_ARATH</name>
<gene>
    <name evidence="6" type="primary">CpNIFS3</name>
    <name evidence="8" type="ordered locus">At5g26600</name>
    <name evidence="9" type="ORF">F21E10</name>
</gene>
<evidence type="ECO:0000250" key="1">
    <source>
        <dbReference type="UniProtKB" id="Q9M1R1"/>
    </source>
</evidence>
<evidence type="ECO:0000255" key="2"/>
<evidence type="ECO:0000255" key="3">
    <source>
        <dbReference type="RuleBase" id="RU004075"/>
    </source>
</evidence>
<evidence type="ECO:0000256" key="4">
    <source>
        <dbReference type="SAM" id="MobiDB-lite"/>
    </source>
</evidence>
<evidence type="ECO:0000269" key="5">
    <source>
    </source>
</evidence>
<evidence type="ECO:0000303" key="6">
    <source>
    </source>
</evidence>
<evidence type="ECO:0000305" key="7"/>
<evidence type="ECO:0000312" key="8">
    <source>
        <dbReference type="Araport" id="AT5G26600"/>
    </source>
</evidence>
<evidence type="ECO:0000312" key="9">
    <source>
        <dbReference type="EMBL" id="AF058914"/>
    </source>
</evidence>
<evidence type="ECO:0000312" key="10">
    <source>
        <dbReference type="Proteomes" id="UP000006548"/>
    </source>
</evidence>
<keyword id="KW-0150">Chloroplast</keyword>
<keyword id="KW-0456">Lyase</keyword>
<keyword id="KW-0934">Plastid</keyword>
<keyword id="KW-0663">Pyridoxal phosphate</keyword>
<keyword id="KW-1185">Reference proteome</keyword>
<keyword id="KW-0809">Transit peptide</keyword>
<sequence>MASSLSPPEEASYHHRHTKRYTSSASSASSTTNGTVESSVSDFVKRPKISHPNYISSSEIESEFSHHDPDFARINNGSFGCCPSSILALQRDWQLRFLRQPDRFYFDELKPKISDSRSVIKRLINAEHDDEVSIVDNATTAAAIVLQQTAWAFREGRFDKGDAVVMLHYAYGSVKKSVEAYVTRSGGHVTEVQLPFPVISADEIIDRFRIGLESGKANGRRVRLALIDHVTSMPSVVIPIKELVKICRREGVDQVFVDAAHGIGCVDVDMKEIGADFYTSNLHKWFFAPPSVAFLYCRKSSNGGVADLHHPVVSNEYGNGLAVESSWVGTRDYSAQLVVPSILEFVNRFEGGIDGIKKRNHESVVEMGQMLVKSWGTQLGCPPEMCASMIMVGLPVCLGVSSESDVLKLRTFLREKFRIEIPIYFRPPGDGEIDPITGYVRISFQVYNKPEDYHRLRDAINGLVRDGFKCTSLSC</sequence>
<protein>
    <recommendedName>
        <fullName evidence="7">Probable L-cysteine desulfhydrase, chloroplastic</fullName>
        <ecNumber>4.4.1.-</ecNumber>
    </recommendedName>
    <alternativeName>
        <fullName evidence="6">Chloroplastic cysteine desulfurase-like protein 3</fullName>
    </alternativeName>
    <alternativeName>
        <fullName evidence="6">NIFS-like protein 3</fullName>
        <shortName evidence="6">CpNifS3</shortName>
    </alternativeName>
</protein>
<organism evidence="10">
    <name type="scientific">Arabidopsis thaliana</name>
    <name type="common">Mouse-ear cress</name>
    <dbReference type="NCBI Taxonomy" id="3702"/>
    <lineage>
        <taxon>Eukaryota</taxon>
        <taxon>Viridiplantae</taxon>
        <taxon>Streptophyta</taxon>
        <taxon>Embryophyta</taxon>
        <taxon>Tracheophyta</taxon>
        <taxon>Spermatophyta</taxon>
        <taxon>Magnoliopsida</taxon>
        <taxon>eudicotyledons</taxon>
        <taxon>Gunneridae</taxon>
        <taxon>Pentapetalae</taxon>
        <taxon>rosids</taxon>
        <taxon>malvids</taxon>
        <taxon>Brassicales</taxon>
        <taxon>Brassicaceae</taxon>
        <taxon>Camelineae</taxon>
        <taxon>Arabidopsis</taxon>
    </lineage>
</organism>
<proteinExistence type="evidence at protein level"/>
<comment type="function">
    <text evidence="1">May catalyze the production of hydrogen sulfide (H2S) from cysteine.</text>
</comment>
<comment type="subunit">
    <text evidence="5">Interacts in vitro with QS (PubMed:18978034).</text>
</comment>
<comment type="subcellular location">
    <subcellularLocation>
        <location evidence="2">Plastid</location>
        <location evidence="2">Chloroplast</location>
    </subcellularLocation>
</comment>
<comment type="similarity">
    <text evidence="3">Belongs to the class-V pyridoxal-phosphate-dependent aminotransferase family.</text>
</comment>
<comment type="caution">
    <text evidence="6 7">Identified as a putative plastidic SufS-like protein and thus called CpNifS3 (PubMed:18978034). However, it seems to be more related to L-cysteine desulfhydrase.</text>
</comment>